<organism>
    <name type="scientific">Bothrops jararacussu</name>
    <name type="common">Jararacussu</name>
    <dbReference type="NCBI Taxonomy" id="8726"/>
    <lineage>
        <taxon>Eukaryota</taxon>
        <taxon>Metazoa</taxon>
        <taxon>Chordata</taxon>
        <taxon>Craniata</taxon>
        <taxon>Vertebrata</taxon>
        <taxon>Euteleostomi</taxon>
        <taxon>Lepidosauria</taxon>
        <taxon>Squamata</taxon>
        <taxon>Bifurcata</taxon>
        <taxon>Unidentata</taxon>
        <taxon>Episquamata</taxon>
        <taxon>Toxicofera</taxon>
        <taxon>Serpentes</taxon>
        <taxon>Colubroidea</taxon>
        <taxon>Viperidae</taxon>
        <taxon>Crotalinae</taxon>
        <taxon>Bothrops</taxon>
    </lineage>
</organism>
<name>PA2A_BOTJR</name>
<evidence type="ECO:0000255" key="1">
    <source>
        <dbReference type="PROSITE-ProRule" id="PRU10035"/>
    </source>
</evidence>
<evidence type="ECO:0000255" key="2">
    <source>
        <dbReference type="PROSITE-ProRule" id="PRU10036"/>
    </source>
</evidence>
<evidence type="ECO:0000269" key="3">
    <source>
    </source>
</evidence>
<evidence type="ECO:0000269" key="4">
    <source>
    </source>
</evidence>
<evidence type="ECO:0000269" key="5">
    <source>
    </source>
</evidence>
<evidence type="ECO:0000269" key="6">
    <source>
    </source>
</evidence>
<evidence type="ECO:0000269" key="7">
    <source>
    </source>
</evidence>
<evidence type="ECO:0000269" key="8">
    <source>
    </source>
</evidence>
<evidence type="ECO:0000303" key="9">
    <source>
    </source>
</evidence>
<evidence type="ECO:0000305" key="10"/>
<evidence type="ECO:0000305" key="11">
    <source>
    </source>
</evidence>
<evidence type="ECO:0000305" key="12">
    <source>
    </source>
</evidence>
<evidence type="ECO:0000305" key="13">
    <source>
    </source>
</evidence>
<evidence type="ECO:0000305" key="14">
    <source>
    </source>
</evidence>
<evidence type="ECO:0007744" key="15">
    <source>
        <dbReference type="PDB" id="1UMV"/>
    </source>
</evidence>
<evidence type="ECO:0007744" key="16">
    <source>
        <dbReference type="PDB" id="1Z76"/>
    </source>
</evidence>
<evidence type="ECO:0007744" key="17">
    <source>
        <dbReference type="PDB" id="1ZL7"/>
    </source>
</evidence>
<evidence type="ECO:0007829" key="18">
    <source>
        <dbReference type="PDB" id="1ZLB"/>
    </source>
</evidence>
<accession>Q8AXY1</accession>
<feature type="signal peptide" evidence="3">
    <location>
        <begin position="1"/>
        <end position="16"/>
    </location>
</feature>
<feature type="chain" id="PRO_0000413804" description="Acidic phospholipase A2 BthA-1">
    <location>
        <begin position="17"/>
        <end position="138"/>
    </location>
</feature>
<feature type="active site" evidence="14">
    <location>
        <position position="63"/>
    </location>
</feature>
<feature type="active site" evidence="14">
    <location>
        <position position="105"/>
    </location>
</feature>
<feature type="binding site" evidence="6 8 15 17">
    <location>
        <position position="43"/>
    </location>
    <ligand>
        <name>Ca(2+)</name>
        <dbReference type="ChEBI" id="CHEBI:29108"/>
    </ligand>
</feature>
<feature type="binding site" evidence="6 8 15 17">
    <location>
        <position position="47"/>
    </location>
    <ligand>
        <name>Ca(2+)</name>
        <dbReference type="ChEBI" id="CHEBI:29108"/>
    </ligand>
</feature>
<feature type="binding site" evidence="6 8 15 17">
    <location>
        <position position="48"/>
    </location>
    <ligand>
        <name>Ca(2+)</name>
        <dbReference type="ChEBI" id="CHEBI:29108"/>
    </ligand>
</feature>
<feature type="binding site" evidence="6 8 15 17">
    <location>
        <position position="64"/>
    </location>
    <ligand>
        <name>Ca(2+)</name>
        <dbReference type="ChEBI" id="CHEBI:29108"/>
    </ligand>
</feature>
<feature type="disulfide bond" evidence="6 7 8 15 16 17">
    <location>
        <begin position="42"/>
        <end position="131"/>
    </location>
</feature>
<feature type="disulfide bond" evidence="6 7 8 15 16 17">
    <location>
        <begin position="44"/>
        <end position="60"/>
    </location>
</feature>
<feature type="disulfide bond" evidence="6 7 8 15 16 17">
    <location>
        <begin position="59"/>
        <end position="111"/>
    </location>
</feature>
<feature type="disulfide bond" evidence="6 7 8 15 16 17">
    <location>
        <begin position="65"/>
        <end position="138"/>
    </location>
</feature>
<feature type="disulfide bond" evidence="6 7 8 15 16 17">
    <location>
        <begin position="66"/>
        <end position="104"/>
    </location>
</feature>
<feature type="disulfide bond" evidence="6 7 8 15 16 17">
    <location>
        <begin position="73"/>
        <end position="97"/>
    </location>
</feature>
<feature type="disulfide bond" evidence="6 7 8 15 16 17">
    <location>
        <begin position="91"/>
        <end position="102"/>
    </location>
</feature>
<feature type="helix" evidence="18">
    <location>
        <begin position="18"/>
        <end position="29"/>
    </location>
</feature>
<feature type="helix" evidence="18">
    <location>
        <begin position="33"/>
        <end position="38"/>
    </location>
</feature>
<feature type="turn" evidence="18">
    <location>
        <begin position="41"/>
        <end position="43"/>
    </location>
</feature>
<feature type="strand" evidence="18">
    <location>
        <begin position="44"/>
        <end position="47"/>
    </location>
</feature>
<feature type="helix" evidence="18">
    <location>
        <begin position="55"/>
        <end position="68"/>
    </location>
</feature>
<feature type="turn" evidence="18">
    <location>
        <begin position="75"/>
        <end position="77"/>
    </location>
</feature>
<feature type="strand" evidence="18">
    <location>
        <begin position="82"/>
        <end position="85"/>
    </location>
</feature>
<feature type="strand" evidence="18">
    <location>
        <begin position="88"/>
        <end position="91"/>
    </location>
</feature>
<feature type="helix" evidence="18">
    <location>
        <begin position="96"/>
        <end position="114"/>
    </location>
</feature>
<feature type="helix" evidence="18">
    <location>
        <begin position="115"/>
        <end position="118"/>
    </location>
</feature>
<feature type="helix" evidence="18">
    <location>
        <begin position="121"/>
        <end position="123"/>
    </location>
</feature>
<feature type="helix" evidence="18">
    <location>
        <begin position="128"/>
        <end position="130"/>
    </location>
</feature>
<sequence length="138" mass="15456">MRTLWIMAVLLVGVEGSLWQFGKMINYVMGESGVLQYLSYGCYCGLGGQGQPTDATDRCCFVHDCCYGKVTGCDPKIDSYTYSKKNGDVVCGGDDPCKKQICECDRVATTCFRDNKDTYDIKYWFYGAKNCQEKSEPC</sequence>
<proteinExistence type="evidence at protein level"/>
<comment type="function">
    <text evidence="3 4 5">Snake venom phospholipase A2 (PLA2) that displays edema-inducing activities (activity that is inhibited by EDTA and dexamethasone), inhibits phospholipid-dependent collagen/ADP-induced platelet aggregation, possess hypotensive as well as anticoagulant activities. In addition, this enzyme shows bactericidal activity against E.coli and S.aureus. PLA2 catalyzes the calcium-dependent hydrolysis of the 2-acyl groups in 3-sn-phosphoglycerides.</text>
</comment>
<comment type="catalytic activity">
    <reaction evidence="1 2 3">
        <text>a 1,2-diacyl-sn-glycero-3-phosphocholine + H2O = a 1-acyl-sn-glycero-3-phosphocholine + a fatty acid + H(+)</text>
        <dbReference type="Rhea" id="RHEA:15801"/>
        <dbReference type="ChEBI" id="CHEBI:15377"/>
        <dbReference type="ChEBI" id="CHEBI:15378"/>
        <dbReference type="ChEBI" id="CHEBI:28868"/>
        <dbReference type="ChEBI" id="CHEBI:57643"/>
        <dbReference type="ChEBI" id="CHEBI:58168"/>
        <dbReference type="EC" id="3.1.1.4"/>
    </reaction>
</comment>
<comment type="cofactor">
    <cofactor evidence="13 14">
        <name>Ca(2+)</name>
        <dbReference type="ChEBI" id="CHEBI:29108"/>
    </cofactor>
    <text evidence="13 14">Binds 1 Ca(2+) ion per subunit.</text>
</comment>
<comment type="activity regulation">
    <text evidence="4 7">Inhibited by EDTA and bromophenacyl bromide (BPB).</text>
</comment>
<comment type="subunit">
    <text evidence="4 6 8">Homodimer; non-covalently linked.</text>
</comment>
<comment type="subcellular location">
    <subcellularLocation>
        <location evidence="3 4">Secreted</location>
    </subcellularLocation>
</comment>
<comment type="tissue specificity">
    <text evidence="11 12">Expressed by the venom gland.</text>
</comment>
<comment type="toxic dose">
    <text evidence="3">LD(50) is 25 mg/kg by intraperitoneal injection into mice.</text>
</comment>
<comment type="toxic dose">
    <text evidence="3">LD(50) is 7.5 mg/kg by intravenous injection into mice.</text>
</comment>
<comment type="toxic dose">
    <text evidence="3">LD(50) is 0.5 mg/kg by intracerebroventricular injection.</text>
</comment>
<comment type="miscellaneous">
    <text evidence="11">This enzyme has been found to be not myotoxic, not cytotoxic, not hemorrhagic and not lethal.</text>
</comment>
<comment type="similarity">
    <text evidence="10">Belongs to the phospholipase A2 family. Group II subfamily. D49 sub-subfamily.</text>
</comment>
<keyword id="KW-0002">3D-structure</keyword>
<keyword id="KW-0044">Antibiotic</keyword>
<keyword id="KW-0929">Antimicrobial</keyword>
<keyword id="KW-1203">Blood coagulation cascade inhibiting toxin</keyword>
<keyword id="KW-0106">Calcium</keyword>
<keyword id="KW-0903">Direct protein sequencing</keyword>
<keyword id="KW-1015">Disulfide bond</keyword>
<keyword id="KW-1199">Hemostasis impairing toxin</keyword>
<keyword id="KW-0378">Hydrolase</keyword>
<keyword id="KW-0382">Hypotensive agent</keyword>
<keyword id="KW-0442">Lipid degradation</keyword>
<keyword id="KW-0443">Lipid metabolism</keyword>
<keyword id="KW-0479">Metal-binding</keyword>
<keyword id="KW-1201">Platelet aggregation inhibiting toxin</keyword>
<keyword id="KW-0964">Secreted</keyword>
<keyword id="KW-0732">Signal</keyword>
<keyword id="KW-0800">Toxin</keyword>
<dbReference type="EC" id="3.1.1.4" evidence="3"/>
<dbReference type="EMBL" id="AY145836">
    <property type="protein sequence ID" value="AAN37410.1"/>
    <property type="molecule type" value="mRNA"/>
</dbReference>
<dbReference type="PDB" id="1U73">
    <property type="method" value="X-ray"/>
    <property type="resolution" value="1.90 A"/>
    <property type="chains" value="A/B=17-138"/>
</dbReference>
<dbReference type="PDB" id="1UMV">
    <property type="method" value="X-ray"/>
    <property type="resolution" value="1.79 A"/>
    <property type="chains" value="X=17-138"/>
</dbReference>
<dbReference type="PDB" id="1Z76">
    <property type="method" value="X-ray"/>
    <property type="resolution" value="1.85 A"/>
    <property type="chains" value="A/B=17-138"/>
</dbReference>
<dbReference type="PDB" id="1ZL7">
    <property type="method" value="X-ray"/>
    <property type="resolution" value="1.60 A"/>
    <property type="chains" value="A=17-138"/>
</dbReference>
<dbReference type="PDB" id="1ZLB">
    <property type="method" value="X-ray"/>
    <property type="resolution" value="0.97 A"/>
    <property type="chains" value="A=17-138"/>
</dbReference>
<dbReference type="PDBsum" id="1U73"/>
<dbReference type="PDBsum" id="1UMV"/>
<dbReference type="PDBsum" id="1Z76"/>
<dbReference type="PDBsum" id="1ZL7"/>
<dbReference type="PDBsum" id="1ZLB"/>
<dbReference type="SMR" id="Q8AXY1"/>
<dbReference type="EvolutionaryTrace" id="Q8AXY1"/>
<dbReference type="GO" id="GO:0005576">
    <property type="term" value="C:extracellular region"/>
    <property type="evidence" value="ECO:0007669"/>
    <property type="project" value="UniProtKB-SubCell"/>
</dbReference>
<dbReference type="GO" id="GO:0005509">
    <property type="term" value="F:calcium ion binding"/>
    <property type="evidence" value="ECO:0007669"/>
    <property type="project" value="InterPro"/>
</dbReference>
<dbReference type="GO" id="GO:0047498">
    <property type="term" value="F:calcium-dependent phospholipase A2 activity"/>
    <property type="evidence" value="ECO:0007669"/>
    <property type="project" value="TreeGrafter"/>
</dbReference>
<dbReference type="GO" id="GO:0005543">
    <property type="term" value="F:phospholipid binding"/>
    <property type="evidence" value="ECO:0007669"/>
    <property type="project" value="TreeGrafter"/>
</dbReference>
<dbReference type="GO" id="GO:0090729">
    <property type="term" value="F:toxin activity"/>
    <property type="evidence" value="ECO:0007669"/>
    <property type="project" value="UniProtKB-KW"/>
</dbReference>
<dbReference type="GO" id="GO:0050482">
    <property type="term" value="P:arachidonate secretion"/>
    <property type="evidence" value="ECO:0007669"/>
    <property type="project" value="InterPro"/>
</dbReference>
<dbReference type="GO" id="GO:0042742">
    <property type="term" value="P:defense response to bacterium"/>
    <property type="evidence" value="ECO:0007669"/>
    <property type="project" value="UniProtKB-KW"/>
</dbReference>
<dbReference type="GO" id="GO:0016042">
    <property type="term" value="P:lipid catabolic process"/>
    <property type="evidence" value="ECO:0007669"/>
    <property type="project" value="UniProtKB-KW"/>
</dbReference>
<dbReference type="GO" id="GO:0042130">
    <property type="term" value="P:negative regulation of T cell proliferation"/>
    <property type="evidence" value="ECO:0007669"/>
    <property type="project" value="TreeGrafter"/>
</dbReference>
<dbReference type="GO" id="GO:0006644">
    <property type="term" value="P:phospholipid metabolic process"/>
    <property type="evidence" value="ECO:0007669"/>
    <property type="project" value="InterPro"/>
</dbReference>
<dbReference type="GO" id="GO:0008217">
    <property type="term" value="P:regulation of blood pressure"/>
    <property type="evidence" value="ECO:0007669"/>
    <property type="project" value="UniProtKB-KW"/>
</dbReference>
<dbReference type="CDD" id="cd00125">
    <property type="entry name" value="PLA2c"/>
    <property type="match status" value="1"/>
</dbReference>
<dbReference type="FunFam" id="1.20.90.10:FF:000001">
    <property type="entry name" value="Basic phospholipase A2 homolog"/>
    <property type="match status" value="1"/>
</dbReference>
<dbReference type="Gene3D" id="1.20.90.10">
    <property type="entry name" value="Phospholipase A2 domain"/>
    <property type="match status" value="1"/>
</dbReference>
<dbReference type="InterPro" id="IPR001211">
    <property type="entry name" value="PLipase_A2"/>
</dbReference>
<dbReference type="InterPro" id="IPR033112">
    <property type="entry name" value="PLipase_A2_Asp_AS"/>
</dbReference>
<dbReference type="InterPro" id="IPR016090">
    <property type="entry name" value="PLipase_A2_dom"/>
</dbReference>
<dbReference type="InterPro" id="IPR036444">
    <property type="entry name" value="PLipase_A2_dom_sf"/>
</dbReference>
<dbReference type="InterPro" id="IPR033113">
    <property type="entry name" value="PLipase_A2_His_AS"/>
</dbReference>
<dbReference type="PANTHER" id="PTHR11716">
    <property type="entry name" value="PHOSPHOLIPASE A2 FAMILY MEMBER"/>
    <property type="match status" value="1"/>
</dbReference>
<dbReference type="PANTHER" id="PTHR11716:SF9">
    <property type="entry name" value="PHOSPHOLIPASE A2, MEMBRANE ASSOCIATED"/>
    <property type="match status" value="1"/>
</dbReference>
<dbReference type="Pfam" id="PF00068">
    <property type="entry name" value="Phospholip_A2_1"/>
    <property type="match status" value="1"/>
</dbReference>
<dbReference type="PRINTS" id="PR00389">
    <property type="entry name" value="PHPHLIPASEA2"/>
</dbReference>
<dbReference type="SMART" id="SM00085">
    <property type="entry name" value="PA2c"/>
    <property type="match status" value="1"/>
</dbReference>
<dbReference type="SUPFAM" id="SSF48619">
    <property type="entry name" value="Phospholipase A2, PLA2"/>
    <property type="match status" value="1"/>
</dbReference>
<dbReference type="PROSITE" id="PS00119">
    <property type="entry name" value="PA2_ASP"/>
    <property type="match status" value="1"/>
</dbReference>
<dbReference type="PROSITE" id="PS00118">
    <property type="entry name" value="PA2_HIS"/>
    <property type="match status" value="1"/>
</dbReference>
<reference key="1">
    <citation type="journal article" date="2004" name="Protein J.">
        <title>Cloning and identification of a complete cDNA coding for a bactericidal and antitumoral acidic phospholipase A2 from Bothrops jararacussu venom.</title>
        <authorList>
            <person name="Roberto P.G."/>
            <person name="Kashima S."/>
            <person name="Marcussi S."/>
            <person name="Pereira J.O."/>
            <person name="Astolfi-Filho S."/>
            <person name="Nomizo A."/>
            <person name="Giglio J.R."/>
            <person name="Fontes M.R."/>
            <person name="Soares A.M."/>
            <person name="Franca S.C."/>
        </authorList>
    </citation>
    <scope>NUCLEOTIDE SEQUENCE [MRNA]</scope>
    <scope>FUNCTION</scope>
    <scope>ACTIVITY REGULATION</scope>
    <scope>SUBUNIT</scope>
    <scope>SUBCELLULAR LOCATION</scope>
    <source>
        <tissue>Venom</tissue>
        <tissue>Venom gland</tissue>
    </source>
</reference>
<reference key="2">
    <citation type="journal article" date="2004" name="Protein Expr. Purif.">
        <title>Cloning and expression of an acidic platelet aggregation inhibitor phospholipase A2 cDNA from Bothrops jararacussu venom gland.</title>
        <authorList>
            <person name="Roberto P.G."/>
            <person name="Kashima S."/>
            <person name="Soares A.M."/>
            <person name="Chioato L."/>
            <person name="Faca V.M."/>
            <person name="Fuly A.L."/>
            <person name="Astolfi-Filho S."/>
            <person name="Pereira J.O."/>
            <person name="Franca S.C."/>
        </authorList>
    </citation>
    <scope>NUCLEOTIDE SEQUENCE [MRNA] OF 17-138</scope>
    <scope>FUNCTION</scope>
    <source>
        <tissue>Venom gland</tissue>
    </source>
</reference>
<reference key="3">
    <citation type="journal article" date="2002" name="Biochem. Pharmacol.">
        <title>Structural and functional characterization of an acidic platelet aggregation inhibitor and hypotensive phospholipase A(2) from Bothrops jararacussu snake venom.</title>
        <authorList>
            <person name="Andriao-Escarso S.H."/>
            <person name="Soares A.M."/>
            <person name="Fontes M.R."/>
            <person name="Fuly A.L."/>
            <person name="Correa F.M."/>
            <person name="Rosa J.C."/>
            <person name="Greene L.J."/>
            <person name="Giglio J.R."/>
        </authorList>
    </citation>
    <scope>PROTEIN SEQUENCE OF 17-50</scope>
    <scope>FUNCTION</scope>
    <scope>CATALYTIC ACTIVITY</scope>
    <scope>SUBCELLULAR LOCATION</scope>
    <scope>TOXIC DOSE</scope>
    <scope>CRYSTALLIZATION</scope>
    <source>
        <tissue>Venom</tissue>
    </source>
</reference>
<reference key="4">
    <citation type="journal article" date="2004" name="Biochem. Biophys. Res. Commun.">
        <title>Crystal structure of an acidic platelet aggregation inhibitor and hypotensive phospholipase A2 in the monomeric and dimeric states: insights into its oligomeric state.</title>
        <authorList>
            <person name="Magro A.J."/>
            <person name="Murakami M.T."/>
            <person name="Marcussi S."/>
            <person name="Soares A.M."/>
            <person name="Arni R.K."/>
            <person name="Fontes M.R."/>
        </authorList>
    </citation>
    <scope>X-RAY CRYSTALLOGRAPHY (1.79 ANGSTROMS) OF 17-138 IN COMPLEX WITH CALCIUM ION</scope>
    <scope>COFACTOR</scope>
    <scope>SUBUNIT</scope>
    <scope>DISULFIDE BONDS</scope>
</reference>
<reference key="5">
    <citation type="journal article" date="2005" name="Acta Crystallogr. D">
        <title>Structure of BthA-I complexed with p-bromophenacyl bromide: possible correlations with lack of pharmacological activity.</title>
        <authorList>
            <person name="Magro A.J."/>
            <person name="Takeda A.A."/>
            <person name="Soares A.M."/>
            <person name="Fontes M.R."/>
        </authorList>
    </citation>
    <scope>X-RAY CRYSTALLOGRAPHY (1.85 ANGSTROMS) OF 17-138 IN COMPLEX WITH BROMOPHENACYL BROMIDE</scope>
    <scope>DISULFIDE BONDS</scope>
    <scope>ACTIVITY REGULATION</scope>
</reference>
<reference key="6">
    <citation type="journal article" date="2006" name="Biochimie">
        <title>Insights into metal ion binding in phospholipases A2: ultra high-resolution crystal structures of an acidic phospholipase A2 in the Ca2+ free and bound states.</title>
        <authorList>
            <person name="Murakami M.T."/>
            <person name="Gabdoulkhakov A."/>
            <person name="Genov N."/>
            <person name="Cintra A.C.O."/>
            <person name="Betzel C."/>
            <person name="Arni R.K."/>
        </authorList>
    </citation>
    <scope>X-RAY CRYSTALLOGRAPHY (0.97 ANGSTROMS) OF 17-138 IN COMPLEX WITH CALCIUM ION</scope>
    <scope>COFACTOR</scope>
    <scope>DISULFIDE BONDS</scope>
</reference>
<protein>
    <recommendedName>
        <fullName>Acidic phospholipase A2 BthA-1</fullName>
        <shortName>svPLA2</shortName>
        <ecNumber evidence="3">3.1.1.4</ecNumber>
    </recommendedName>
    <alternativeName>
        <fullName>BOJU-III</fullName>
    </alternativeName>
    <alternativeName>
        <fullName evidence="9">BthA-I-PLA2</fullName>
    </alternativeName>
    <alternativeName>
        <fullName>Hypotensive phospholipase A2</fullName>
    </alternativeName>
    <alternativeName>
        <fullName>Phosphatidylcholine 2-acylhydrolase</fullName>
    </alternativeName>
</protein>